<organism>
    <name type="scientific">Lupinus princei</name>
    <name type="common">Lupine</name>
    <dbReference type="NCBI Taxonomy" id="53239"/>
    <lineage>
        <taxon>Eukaryota</taxon>
        <taxon>Viridiplantae</taxon>
        <taxon>Streptophyta</taxon>
        <taxon>Embryophyta</taxon>
        <taxon>Tracheophyta</taxon>
        <taxon>Spermatophyta</taxon>
        <taxon>Magnoliopsida</taxon>
        <taxon>eudicotyledons</taxon>
        <taxon>Gunneridae</taxon>
        <taxon>Pentapetalae</taxon>
        <taxon>rosids</taxon>
        <taxon>fabids</taxon>
        <taxon>Fabales</taxon>
        <taxon>Fabaceae</taxon>
        <taxon>Papilionoideae</taxon>
        <taxon>50 kb inversion clade</taxon>
        <taxon>genistoids sensu lato</taxon>
        <taxon>core genistoids</taxon>
        <taxon>Genisteae</taxon>
        <taxon>Lupinus</taxon>
    </lineage>
</organism>
<sequence length="455" mass="50288">SVGFKAGVKDYKLTYYTPDYETKDTDILAAFRVTPQPGVPPEEAGAAVAAESSTGTWTTVWTDGLTSLDRYKGRCYHIEPVAGEESQFIAYVAYPLDLFEEGSVTNMFTSIVGNVFGFKALRALRLEDLRIPNAYVKTFQGPPHGIQVERDKLNKYGRPLLGCTIKPKLGLSAKNYGRAVYECLRGGLDFTKDDENVNSQPFMRWRDRFLFCAEALYKAQAETGEIKGHYLNATAGTCEEMIKRAVFARELGVPIVMHDYLTGGFTANTSLAHYCRDNGLLLHIHRAMHAVIDRQKNHGMHFRVLAKALRLSGGDHIHSGTVVGKLEGEREITLGFVDLLRDDFVEKDRSRGIYFTQDWVSLPGVLPVASGGIHVWHMPALTEIFGDDSVLQFGGGTLGHPWGNAPGAVANRVALEACVQARNEGRDLASEGNQIIREASKWSPELAAACEVWKE</sequence>
<comment type="function">
    <text evidence="1">RuBisCO catalyzes two reactions: the carboxylation of D-ribulose 1,5-bisphosphate, the primary event in carbon dioxide fixation, as well as the oxidative fragmentation of the pentose substrate in the photorespiration process. Both reactions occur simultaneously and in competition at the same active site.</text>
</comment>
<comment type="catalytic activity">
    <reaction evidence="1">
        <text>2 (2R)-3-phosphoglycerate + 2 H(+) = D-ribulose 1,5-bisphosphate + CO2 + H2O</text>
        <dbReference type="Rhea" id="RHEA:23124"/>
        <dbReference type="ChEBI" id="CHEBI:15377"/>
        <dbReference type="ChEBI" id="CHEBI:15378"/>
        <dbReference type="ChEBI" id="CHEBI:16526"/>
        <dbReference type="ChEBI" id="CHEBI:57870"/>
        <dbReference type="ChEBI" id="CHEBI:58272"/>
        <dbReference type="EC" id="4.1.1.39"/>
    </reaction>
</comment>
<comment type="catalytic activity">
    <reaction evidence="1">
        <text>D-ribulose 1,5-bisphosphate + O2 = 2-phosphoglycolate + (2R)-3-phosphoglycerate + 2 H(+)</text>
        <dbReference type="Rhea" id="RHEA:36631"/>
        <dbReference type="ChEBI" id="CHEBI:15378"/>
        <dbReference type="ChEBI" id="CHEBI:15379"/>
        <dbReference type="ChEBI" id="CHEBI:57870"/>
        <dbReference type="ChEBI" id="CHEBI:58033"/>
        <dbReference type="ChEBI" id="CHEBI:58272"/>
    </reaction>
</comment>
<comment type="cofactor">
    <cofactor evidence="1">
        <name>Mg(2+)</name>
        <dbReference type="ChEBI" id="CHEBI:18420"/>
    </cofactor>
    <text evidence="1">Binds 1 Mg(2+) ion per subunit.</text>
</comment>
<comment type="subunit">
    <text evidence="1">Heterohexadecamer of 8 large chains and 8 small chains; disulfide-linked. The disulfide link is formed within the large subunit homodimers.</text>
</comment>
<comment type="subcellular location">
    <subcellularLocation>
        <location>Plastid</location>
        <location>Chloroplast</location>
    </subcellularLocation>
</comment>
<comment type="PTM">
    <text evidence="1">The disulfide bond which can form in the large chain dimeric partners within the hexadecamer appears to be associated with oxidative stress and protein turnover.</text>
</comment>
<comment type="miscellaneous">
    <text evidence="1">The basic functional RuBisCO is composed of a large chain homodimer in a 'head-to-tail' conformation. In form I RuBisCO this homodimer is arranged in a barrel-like tetramer with the small subunits forming a tetrameric 'cap' on each end of the 'barrel'.</text>
</comment>
<comment type="similarity">
    <text evidence="1">Belongs to the RuBisCO large chain family. Type I subfamily.</text>
</comment>
<dbReference type="EC" id="4.1.1.39" evidence="1"/>
<dbReference type="EMBL" id="Z70072">
    <property type="protein sequence ID" value="CAA93931.1"/>
    <property type="molecule type" value="Genomic_DNA"/>
</dbReference>
<dbReference type="SMR" id="P69591"/>
<dbReference type="GO" id="GO:0009507">
    <property type="term" value="C:chloroplast"/>
    <property type="evidence" value="ECO:0007669"/>
    <property type="project" value="UniProtKB-SubCell"/>
</dbReference>
<dbReference type="GO" id="GO:0000287">
    <property type="term" value="F:magnesium ion binding"/>
    <property type="evidence" value="ECO:0007669"/>
    <property type="project" value="InterPro"/>
</dbReference>
<dbReference type="GO" id="GO:0004497">
    <property type="term" value="F:monooxygenase activity"/>
    <property type="evidence" value="ECO:0007669"/>
    <property type="project" value="UniProtKB-KW"/>
</dbReference>
<dbReference type="GO" id="GO:0016984">
    <property type="term" value="F:ribulose-bisphosphate carboxylase activity"/>
    <property type="evidence" value="ECO:0007669"/>
    <property type="project" value="UniProtKB-EC"/>
</dbReference>
<dbReference type="GO" id="GO:0009853">
    <property type="term" value="P:photorespiration"/>
    <property type="evidence" value="ECO:0007669"/>
    <property type="project" value="UniProtKB-KW"/>
</dbReference>
<dbReference type="GO" id="GO:0019253">
    <property type="term" value="P:reductive pentose-phosphate cycle"/>
    <property type="evidence" value="ECO:0007669"/>
    <property type="project" value="UniProtKB-KW"/>
</dbReference>
<dbReference type="CDD" id="cd08212">
    <property type="entry name" value="RuBisCO_large_I"/>
    <property type="match status" value="1"/>
</dbReference>
<dbReference type="FunFam" id="3.20.20.110:FF:000001">
    <property type="entry name" value="Ribulose bisphosphate carboxylase large chain"/>
    <property type="match status" value="1"/>
</dbReference>
<dbReference type="FunFam" id="3.30.70.150:FF:000001">
    <property type="entry name" value="Ribulose bisphosphate carboxylase large chain"/>
    <property type="match status" value="1"/>
</dbReference>
<dbReference type="Gene3D" id="3.20.20.110">
    <property type="entry name" value="Ribulose bisphosphate carboxylase, large subunit, C-terminal domain"/>
    <property type="match status" value="1"/>
</dbReference>
<dbReference type="Gene3D" id="3.30.70.150">
    <property type="entry name" value="RuBisCO large subunit, N-terminal domain"/>
    <property type="match status" value="1"/>
</dbReference>
<dbReference type="HAMAP" id="MF_01338">
    <property type="entry name" value="RuBisCO_L_type1"/>
    <property type="match status" value="1"/>
</dbReference>
<dbReference type="InterPro" id="IPR033966">
    <property type="entry name" value="RuBisCO"/>
</dbReference>
<dbReference type="InterPro" id="IPR020878">
    <property type="entry name" value="RuBisCo_large_chain_AS"/>
</dbReference>
<dbReference type="InterPro" id="IPR000685">
    <property type="entry name" value="RuBisCO_lsu_C"/>
</dbReference>
<dbReference type="InterPro" id="IPR036376">
    <property type="entry name" value="RuBisCO_lsu_C_sf"/>
</dbReference>
<dbReference type="InterPro" id="IPR017443">
    <property type="entry name" value="RuBisCO_lsu_fd_N"/>
</dbReference>
<dbReference type="InterPro" id="IPR036422">
    <property type="entry name" value="RuBisCO_lsu_N_sf"/>
</dbReference>
<dbReference type="InterPro" id="IPR020888">
    <property type="entry name" value="RuBisCO_lsuI"/>
</dbReference>
<dbReference type="NCBIfam" id="NF003252">
    <property type="entry name" value="PRK04208.1"/>
    <property type="match status" value="1"/>
</dbReference>
<dbReference type="PANTHER" id="PTHR42704">
    <property type="entry name" value="RIBULOSE BISPHOSPHATE CARBOXYLASE"/>
    <property type="match status" value="1"/>
</dbReference>
<dbReference type="PANTHER" id="PTHR42704:SF16">
    <property type="entry name" value="RIBULOSE BISPHOSPHATE CARBOXYLASE LARGE CHAIN"/>
    <property type="match status" value="1"/>
</dbReference>
<dbReference type="Pfam" id="PF00016">
    <property type="entry name" value="RuBisCO_large"/>
    <property type="match status" value="1"/>
</dbReference>
<dbReference type="Pfam" id="PF02788">
    <property type="entry name" value="RuBisCO_large_N"/>
    <property type="match status" value="1"/>
</dbReference>
<dbReference type="SFLD" id="SFLDG01052">
    <property type="entry name" value="RuBisCO"/>
    <property type="match status" value="1"/>
</dbReference>
<dbReference type="SFLD" id="SFLDS00014">
    <property type="entry name" value="RuBisCO"/>
    <property type="match status" value="1"/>
</dbReference>
<dbReference type="SFLD" id="SFLDG00301">
    <property type="entry name" value="RuBisCO-like_proteins"/>
    <property type="match status" value="1"/>
</dbReference>
<dbReference type="SUPFAM" id="SSF51649">
    <property type="entry name" value="RuBisCo, C-terminal domain"/>
    <property type="match status" value="1"/>
</dbReference>
<dbReference type="SUPFAM" id="SSF54966">
    <property type="entry name" value="RuBisCO, large subunit, small (N-terminal) domain"/>
    <property type="match status" value="1"/>
</dbReference>
<dbReference type="PROSITE" id="PS00157">
    <property type="entry name" value="RUBISCO_LARGE"/>
    <property type="match status" value="1"/>
</dbReference>
<accession>P69591</accession>
<accession>P92398</accession>
<accession>P92402</accession>
<accession>P92409</accession>
<accession>P92410</accession>
<gene>
    <name evidence="1" type="primary">rbcL</name>
</gene>
<feature type="chain" id="PRO_0000062528" description="Ribulose bisphosphate carboxylase large chain">
    <location>
        <begin position="1" status="less than"/>
        <end position="455" status="greater than"/>
    </location>
</feature>
<feature type="active site" description="Proton acceptor" evidence="1">
    <location>
        <position position="166"/>
    </location>
</feature>
<feature type="active site" description="Proton acceptor" evidence="1">
    <location>
        <position position="285"/>
    </location>
</feature>
<feature type="binding site" description="in homodimeric partner" evidence="1">
    <location>
        <position position="114"/>
    </location>
    <ligand>
        <name>substrate</name>
    </ligand>
</feature>
<feature type="binding site" evidence="1">
    <location>
        <position position="164"/>
    </location>
    <ligand>
        <name>substrate</name>
    </ligand>
</feature>
<feature type="binding site" evidence="1">
    <location>
        <position position="168"/>
    </location>
    <ligand>
        <name>substrate</name>
    </ligand>
</feature>
<feature type="binding site" description="via carbamate group" evidence="1">
    <location>
        <position position="192"/>
    </location>
    <ligand>
        <name>Mg(2+)</name>
        <dbReference type="ChEBI" id="CHEBI:18420"/>
    </ligand>
</feature>
<feature type="binding site" evidence="1">
    <location>
        <position position="194"/>
    </location>
    <ligand>
        <name>Mg(2+)</name>
        <dbReference type="ChEBI" id="CHEBI:18420"/>
    </ligand>
</feature>
<feature type="binding site" evidence="1">
    <location>
        <position position="195"/>
    </location>
    <ligand>
        <name>Mg(2+)</name>
        <dbReference type="ChEBI" id="CHEBI:18420"/>
    </ligand>
</feature>
<feature type="binding site" evidence="1">
    <location>
        <position position="286"/>
    </location>
    <ligand>
        <name>substrate</name>
    </ligand>
</feature>
<feature type="binding site" evidence="1">
    <location>
        <position position="318"/>
    </location>
    <ligand>
        <name>substrate</name>
    </ligand>
</feature>
<feature type="binding site" evidence="1">
    <location>
        <position position="370"/>
    </location>
    <ligand>
        <name>substrate</name>
    </ligand>
</feature>
<feature type="site" description="Transition state stabilizer" evidence="1">
    <location>
        <position position="325"/>
    </location>
</feature>
<feature type="modified residue" description="N6,N6,N6-trimethyllysine" evidence="1">
    <location>
        <position position="5"/>
    </location>
</feature>
<feature type="modified residue" description="N6-carboxylysine" evidence="1">
    <location>
        <position position="192"/>
    </location>
</feature>
<feature type="disulfide bond" description="Interchain; in linked form" evidence="1">
    <location>
        <position position="238"/>
    </location>
</feature>
<feature type="non-terminal residue">
    <location>
        <position position="1"/>
    </location>
</feature>
<feature type="non-terminal residue">
    <location>
        <position position="455"/>
    </location>
</feature>
<reference key="1">
    <citation type="journal article" date="1995" name="Bot. Acta">
        <title>Molecular phylogeny of the Papilionoideae (family Leguminosae): rbcL sequences versus chemical taxonomy.</title>
        <authorList>
            <person name="Kaess E."/>
            <person name="Wink M."/>
        </authorList>
    </citation>
    <scope>NUCLEOTIDE SEQUENCE [GENOMIC DNA]</scope>
    <source>
        <tissue>Leaf</tissue>
    </source>
</reference>
<name>RBL_LUPPR</name>
<evidence type="ECO:0000255" key="1">
    <source>
        <dbReference type="HAMAP-Rule" id="MF_01338"/>
    </source>
</evidence>
<geneLocation type="chloroplast"/>
<keyword id="KW-0113">Calvin cycle</keyword>
<keyword id="KW-0120">Carbon dioxide fixation</keyword>
<keyword id="KW-0150">Chloroplast</keyword>
<keyword id="KW-1015">Disulfide bond</keyword>
<keyword id="KW-0456">Lyase</keyword>
<keyword id="KW-0460">Magnesium</keyword>
<keyword id="KW-0479">Metal-binding</keyword>
<keyword id="KW-0488">Methylation</keyword>
<keyword id="KW-0503">Monooxygenase</keyword>
<keyword id="KW-0560">Oxidoreductase</keyword>
<keyword id="KW-0601">Photorespiration</keyword>
<keyword id="KW-0602">Photosynthesis</keyword>
<keyword id="KW-0934">Plastid</keyword>
<proteinExistence type="inferred from homology"/>
<protein>
    <recommendedName>
        <fullName evidence="1">Ribulose bisphosphate carboxylase large chain</fullName>
        <shortName evidence="1">RuBisCO large subunit</shortName>
        <ecNumber evidence="1">4.1.1.39</ecNumber>
    </recommendedName>
</protein>